<protein>
    <recommendedName>
        <fullName evidence="1">Small ribosomal subunit protein uS10</fullName>
    </recommendedName>
    <alternativeName>
        <fullName evidence="2">30S ribosomal protein S10</fullName>
    </alternativeName>
</protein>
<feature type="chain" id="PRO_1000127199" description="Small ribosomal subunit protein uS10">
    <location>
        <begin position="1"/>
        <end position="102"/>
    </location>
</feature>
<feature type="strand" evidence="3">
    <location>
        <begin position="5"/>
        <end position="14"/>
    </location>
</feature>
<feature type="helix" evidence="3">
    <location>
        <begin position="15"/>
        <end position="31"/>
    </location>
</feature>
<feature type="strand" evidence="3">
    <location>
        <begin position="32"/>
        <end position="41"/>
    </location>
</feature>
<feature type="strand" evidence="3">
    <location>
        <begin position="69"/>
        <end position="78"/>
    </location>
</feature>
<feature type="helix" evidence="3">
    <location>
        <begin position="81"/>
        <end position="89"/>
    </location>
</feature>
<feature type="strand" evidence="3">
    <location>
        <begin position="97"/>
        <end position="99"/>
    </location>
</feature>
<reference key="1">
    <citation type="journal article" date="2011" name="J. Bacteriol.">
        <title>Genome sequence of Thermotoga sp. strain RQ2, a hyperthermophilic bacterium isolated from a geothermally heated region of the seafloor near Ribeira Quente, the Azores.</title>
        <authorList>
            <person name="Swithers K.S."/>
            <person name="DiPippo J.L."/>
            <person name="Bruce D.C."/>
            <person name="Detter C."/>
            <person name="Tapia R."/>
            <person name="Han S."/>
            <person name="Saunders E."/>
            <person name="Goodwin L.A."/>
            <person name="Han J."/>
            <person name="Woyke T."/>
            <person name="Pitluck S."/>
            <person name="Pennacchio L."/>
            <person name="Nolan M."/>
            <person name="Mikhailova N."/>
            <person name="Lykidis A."/>
            <person name="Land M.L."/>
            <person name="Brettin T."/>
            <person name="Stetter K.O."/>
            <person name="Nelson K.E."/>
            <person name="Gogarten J.P."/>
            <person name="Noll K.M."/>
        </authorList>
    </citation>
    <scope>NUCLEOTIDE SEQUENCE [LARGE SCALE GENOMIC DNA]</scope>
    <source>
        <strain>RQ2</strain>
    </source>
</reference>
<dbReference type="EMBL" id="CP000969">
    <property type="protein sequence ID" value="ACB09739.1"/>
    <property type="molecule type" value="Genomic_DNA"/>
</dbReference>
<dbReference type="RefSeq" id="WP_004081837.1">
    <property type="nucleotide sequence ID" value="NC_010483.1"/>
</dbReference>
<dbReference type="PDB" id="2MEW">
    <property type="method" value="NMR"/>
    <property type="chains" value="A=3-102"/>
</dbReference>
<dbReference type="PDBsum" id="2MEW"/>
<dbReference type="SMR" id="B1LBP1"/>
<dbReference type="KEGG" id="trq:TRQ2_1395"/>
<dbReference type="HOGENOM" id="CLU_122625_1_3_0"/>
<dbReference type="EvolutionaryTrace" id="B1LBP1"/>
<dbReference type="Proteomes" id="UP000001687">
    <property type="component" value="Chromosome"/>
</dbReference>
<dbReference type="GO" id="GO:1990904">
    <property type="term" value="C:ribonucleoprotein complex"/>
    <property type="evidence" value="ECO:0007669"/>
    <property type="project" value="UniProtKB-KW"/>
</dbReference>
<dbReference type="GO" id="GO:0005840">
    <property type="term" value="C:ribosome"/>
    <property type="evidence" value="ECO:0007669"/>
    <property type="project" value="UniProtKB-KW"/>
</dbReference>
<dbReference type="GO" id="GO:0003735">
    <property type="term" value="F:structural constituent of ribosome"/>
    <property type="evidence" value="ECO:0007669"/>
    <property type="project" value="InterPro"/>
</dbReference>
<dbReference type="GO" id="GO:0000049">
    <property type="term" value="F:tRNA binding"/>
    <property type="evidence" value="ECO:0007669"/>
    <property type="project" value="UniProtKB-UniRule"/>
</dbReference>
<dbReference type="GO" id="GO:0006412">
    <property type="term" value="P:translation"/>
    <property type="evidence" value="ECO:0007669"/>
    <property type="project" value="UniProtKB-UniRule"/>
</dbReference>
<dbReference type="FunFam" id="3.30.70.600:FF:000001">
    <property type="entry name" value="30S ribosomal protein S10"/>
    <property type="match status" value="1"/>
</dbReference>
<dbReference type="Gene3D" id="3.30.70.600">
    <property type="entry name" value="Ribosomal protein S10 domain"/>
    <property type="match status" value="1"/>
</dbReference>
<dbReference type="HAMAP" id="MF_00508">
    <property type="entry name" value="Ribosomal_uS10"/>
    <property type="match status" value="1"/>
</dbReference>
<dbReference type="InterPro" id="IPR001848">
    <property type="entry name" value="Ribosomal_uS10"/>
</dbReference>
<dbReference type="InterPro" id="IPR018268">
    <property type="entry name" value="Ribosomal_uS10_CS"/>
</dbReference>
<dbReference type="InterPro" id="IPR027486">
    <property type="entry name" value="Ribosomal_uS10_dom"/>
</dbReference>
<dbReference type="InterPro" id="IPR036838">
    <property type="entry name" value="Ribosomal_uS10_dom_sf"/>
</dbReference>
<dbReference type="NCBIfam" id="NF001861">
    <property type="entry name" value="PRK00596.1"/>
    <property type="match status" value="1"/>
</dbReference>
<dbReference type="NCBIfam" id="TIGR01049">
    <property type="entry name" value="rpsJ_bact"/>
    <property type="match status" value="1"/>
</dbReference>
<dbReference type="PANTHER" id="PTHR11700">
    <property type="entry name" value="30S RIBOSOMAL PROTEIN S10 FAMILY MEMBER"/>
    <property type="match status" value="1"/>
</dbReference>
<dbReference type="Pfam" id="PF00338">
    <property type="entry name" value="Ribosomal_S10"/>
    <property type="match status" value="1"/>
</dbReference>
<dbReference type="PRINTS" id="PR00971">
    <property type="entry name" value="RIBOSOMALS10"/>
</dbReference>
<dbReference type="SMART" id="SM01403">
    <property type="entry name" value="Ribosomal_S10"/>
    <property type="match status" value="1"/>
</dbReference>
<dbReference type="SUPFAM" id="SSF54999">
    <property type="entry name" value="Ribosomal protein S10"/>
    <property type="match status" value="1"/>
</dbReference>
<dbReference type="PROSITE" id="PS00361">
    <property type="entry name" value="RIBOSOMAL_S10"/>
    <property type="match status" value="1"/>
</dbReference>
<sequence length="102" mass="11637">MPGQKIRIKLKAYDHELLDESAKKIVEVAKSTNSKVSGPIPLPTERTLYCVLRSPMKHKDSREHFEKRVHKRLIDIIDPSPKTIDALMRINLPAGVDVEIKL</sequence>
<proteinExistence type="evidence at protein level"/>
<gene>
    <name evidence="1" type="primary">rpsJ</name>
    <name type="ordered locus">TRQ2_1395</name>
</gene>
<name>RS10_THESQ</name>
<accession>B1LBP1</accession>
<evidence type="ECO:0000255" key="1">
    <source>
        <dbReference type="HAMAP-Rule" id="MF_00508"/>
    </source>
</evidence>
<evidence type="ECO:0000305" key="2"/>
<evidence type="ECO:0007829" key="3">
    <source>
        <dbReference type="PDB" id="2MEW"/>
    </source>
</evidence>
<keyword id="KW-0002">3D-structure</keyword>
<keyword id="KW-0687">Ribonucleoprotein</keyword>
<keyword id="KW-0689">Ribosomal protein</keyword>
<organism>
    <name type="scientific">Thermotoga sp. (strain RQ2)</name>
    <dbReference type="NCBI Taxonomy" id="126740"/>
    <lineage>
        <taxon>Bacteria</taxon>
        <taxon>Thermotogati</taxon>
        <taxon>Thermotogota</taxon>
        <taxon>Thermotogae</taxon>
        <taxon>Thermotogales</taxon>
        <taxon>Thermotogaceae</taxon>
        <taxon>Thermotoga</taxon>
    </lineage>
</organism>
<comment type="function">
    <text evidence="1">Involved in the binding of tRNA to the ribosomes.</text>
</comment>
<comment type="subunit">
    <text evidence="1">Part of the 30S ribosomal subunit.</text>
</comment>
<comment type="similarity">
    <text evidence="1">Belongs to the universal ribosomal protein uS10 family.</text>
</comment>